<sequence>MSVLVPMVVEQTSRGERAYDIYSRLLKDRVIFLVGQVEDHMANLAIAQMLFLESENPNKDINLYINSPGGAVTSAMAIYDTMQFVKPDVRTLCIGQAASAGALLLAGGAKGKRHCLPHSSVMIHQVLGGYQGQGTDIQIHAKQTQRVSDQLNQILAKHTGKDIERVEKDTNRDYFLTPEEAVEYGLIDSIFTERP</sequence>
<name>CLPP_COXBN</name>
<proteinExistence type="inferred from homology"/>
<evidence type="ECO:0000255" key="1">
    <source>
        <dbReference type="HAMAP-Rule" id="MF_00444"/>
    </source>
</evidence>
<comment type="function">
    <text evidence="1">Cleaves peptides in various proteins in a process that requires ATP hydrolysis. Has a chymotrypsin-like activity. Plays a major role in the degradation of misfolded proteins.</text>
</comment>
<comment type="catalytic activity">
    <reaction evidence="1">
        <text>Hydrolysis of proteins to small peptides in the presence of ATP and magnesium. alpha-casein is the usual test substrate. In the absence of ATP, only oligopeptides shorter than five residues are hydrolyzed (such as succinyl-Leu-Tyr-|-NHMec, and Leu-Tyr-Leu-|-Tyr-Trp, in which cleavage of the -Tyr-|-Leu- and -Tyr-|-Trp bonds also occurs).</text>
        <dbReference type="EC" id="3.4.21.92"/>
    </reaction>
</comment>
<comment type="subunit">
    <text evidence="1">Fourteen ClpP subunits assemble into 2 heptameric rings which stack back to back to give a disk-like structure with a central cavity, resembling the structure of eukaryotic proteasomes.</text>
</comment>
<comment type="subcellular location">
    <subcellularLocation>
        <location evidence="1">Cytoplasm</location>
    </subcellularLocation>
</comment>
<comment type="similarity">
    <text evidence="1">Belongs to the peptidase S14 family.</text>
</comment>
<protein>
    <recommendedName>
        <fullName evidence="1">ATP-dependent Clp protease proteolytic subunit</fullName>
        <ecNumber evidence="1">3.4.21.92</ecNumber>
    </recommendedName>
    <alternativeName>
        <fullName evidence="1">Endopeptidase Clp</fullName>
    </alternativeName>
</protein>
<dbReference type="EC" id="3.4.21.92" evidence="1"/>
<dbReference type="EMBL" id="CP000733">
    <property type="protein sequence ID" value="ABS77050.1"/>
    <property type="molecule type" value="Genomic_DNA"/>
</dbReference>
<dbReference type="RefSeq" id="WP_005771772.1">
    <property type="nucleotide sequence ID" value="NC_009727.1"/>
</dbReference>
<dbReference type="SMR" id="A9KDS6"/>
<dbReference type="MEROPS" id="S14.001"/>
<dbReference type="KEGG" id="cbd:CBUD_0752"/>
<dbReference type="HOGENOM" id="CLU_058707_3_2_6"/>
<dbReference type="Proteomes" id="UP000008555">
    <property type="component" value="Chromosome"/>
</dbReference>
<dbReference type="GO" id="GO:0005737">
    <property type="term" value="C:cytoplasm"/>
    <property type="evidence" value="ECO:0007669"/>
    <property type="project" value="UniProtKB-SubCell"/>
</dbReference>
<dbReference type="GO" id="GO:0009368">
    <property type="term" value="C:endopeptidase Clp complex"/>
    <property type="evidence" value="ECO:0007669"/>
    <property type="project" value="TreeGrafter"/>
</dbReference>
<dbReference type="GO" id="GO:0004176">
    <property type="term" value="F:ATP-dependent peptidase activity"/>
    <property type="evidence" value="ECO:0007669"/>
    <property type="project" value="InterPro"/>
</dbReference>
<dbReference type="GO" id="GO:0051117">
    <property type="term" value="F:ATPase binding"/>
    <property type="evidence" value="ECO:0007669"/>
    <property type="project" value="TreeGrafter"/>
</dbReference>
<dbReference type="GO" id="GO:0004252">
    <property type="term" value="F:serine-type endopeptidase activity"/>
    <property type="evidence" value="ECO:0007669"/>
    <property type="project" value="UniProtKB-UniRule"/>
</dbReference>
<dbReference type="GO" id="GO:0006515">
    <property type="term" value="P:protein quality control for misfolded or incompletely synthesized proteins"/>
    <property type="evidence" value="ECO:0007669"/>
    <property type="project" value="TreeGrafter"/>
</dbReference>
<dbReference type="CDD" id="cd07017">
    <property type="entry name" value="S14_ClpP_2"/>
    <property type="match status" value="1"/>
</dbReference>
<dbReference type="FunFam" id="3.90.226.10:FF:000001">
    <property type="entry name" value="ATP-dependent Clp protease proteolytic subunit"/>
    <property type="match status" value="1"/>
</dbReference>
<dbReference type="Gene3D" id="3.90.226.10">
    <property type="entry name" value="2-enoyl-CoA Hydratase, Chain A, domain 1"/>
    <property type="match status" value="1"/>
</dbReference>
<dbReference type="HAMAP" id="MF_00444">
    <property type="entry name" value="ClpP"/>
    <property type="match status" value="1"/>
</dbReference>
<dbReference type="InterPro" id="IPR001907">
    <property type="entry name" value="ClpP"/>
</dbReference>
<dbReference type="InterPro" id="IPR029045">
    <property type="entry name" value="ClpP/crotonase-like_dom_sf"/>
</dbReference>
<dbReference type="InterPro" id="IPR023562">
    <property type="entry name" value="ClpP/TepA"/>
</dbReference>
<dbReference type="InterPro" id="IPR018215">
    <property type="entry name" value="ClpP_Ser_AS"/>
</dbReference>
<dbReference type="NCBIfam" id="TIGR00493">
    <property type="entry name" value="clpP"/>
    <property type="match status" value="1"/>
</dbReference>
<dbReference type="NCBIfam" id="NF001368">
    <property type="entry name" value="PRK00277.1"/>
    <property type="match status" value="1"/>
</dbReference>
<dbReference type="NCBIfam" id="NF009205">
    <property type="entry name" value="PRK12553.1"/>
    <property type="match status" value="1"/>
</dbReference>
<dbReference type="PANTHER" id="PTHR10381">
    <property type="entry name" value="ATP-DEPENDENT CLP PROTEASE PROTEOLYTIC SUBUNIT"/>
    <property type="match status" value="1"/>
</dbReference>
<dbReference type="PANTHER" id="PTHR10381:SF70">
    <property type="entry name" value="ATP-DEPENDENT CLP PROTEASE PROTEOLYTIC SUBUNIT"/>
    <property type="match status" value="1"/>
</dbReference>
<dbReference type="Pfam" id="PF00574">
    <property type="entry name" value="CLP_protease"/>
    <property type="match status" value="1"/>
</dbReference>
<dbReference type="PRINTS" id="PR00127">
    <property type="entry name" value="CLPPROTEASEP"/>
</dbReference>
<dbReference type="SUPFAM" id="SSF52096">
    <property type="entry name" value="ClpP/crotonase"/>
    <property type="match status" value="1"/>
</dbReference>
<dbReference type="PROSITE" id="PS00381">
    <property type="entry name" value="CLP_PROTEASE_SER"/>
    <property type="match status" value="1"/>
</dbReference>
<gene>
    <name evidence="1" type="primary">clpP</name>
    <name type="ordered locus">CBUD_0752</name>
</gene>
<accession>A9KDS6</accession>
<organism>
    <name type="scientific">Coxiella burnetii (strain Dugway 5J108-111)</name>
    <dbReference type="NCBI Taxonomy" id="434922"/>
    <lineage>
        <taxon>Bacteria</taxon>
        <taxon>Pseudomonadati</taxon>
        <taxon>Pseudomonadota</taxon>
        <taxon>Gammaproteobacteria</taxon>
        <taxon>Legionellales</taxon>
        <taxon>Coxiellaceae</taxon>
        <taxon>Coxiella</taxon>
    </lineage>
</organism>
<reference key="1">
    <citation type="journal article" date="2009" name="Infect. Immun.">
        <title>Comparative genomics reveal extensive transposon-mediated genomic plasticity and diversity among potential effector proteins within the genus Coxiella.</title>
        <authorList>
            <person name="Beare P.A."/>
            <person name="Unsworth N."/>
            <person name="Andoh M."/>
            <person name="Voth D.E."/>
            <person name="Omsland A."/>
            <person name="Gilk S.D."/>
            <person name="Williams K.P."/>
            <person name="Sobral B.W."/>
            <person name="Kupko J.J. III"/>
            <person name="Porcella S.F."/>
            <person name="Samuel J.E."/>
            <person name="Heinzen R.A."/>
        </authorList>
    </citation>
    <scope>NUCLEOTIDE SEQUENCE [LARGE SCALE GENOMIC DNA]</scope>
    <source>
        <strain>Dugway 5J108-111</strain>
    </source>
</reference>
<feature type="chain" id="PRO_1000080886" description="ATP-dependent Clp protease proteolytic subunit">
    <location>
        <begin position="1"/>
        <end position="195"/>
    </location>
</feature>
<feature type="active site" description="Nucleophile" evidence="1">
    <location>
        <position position="99"/>
    </location>
</feature>
<feature type="active site" evidence="1">
    <location>
        <position position="124"/>
    </location>
</feature>
<keyword id="KW-0963">Cytoplasm</keyword>
<keyword id="KW-0378">Hydrolase</keyword>
<keyword id="KW-0645">Protease</keyword>
<keyword id="KW-0720">Serine protease</keyword>